<feature type="chain" id="PRO_0000073209" description="Ion-translocating oxidoreductase complex subunit C">
    <location>
        <begin position="1"/>
        <end position="835"/>
    </location>
</feature>
<feature type="domain" description="4Fe-4S ferredoxin-type 1" evidence="1">
    <location>
        <begin position="368"/>
        <end position="397"/>
    </location>
</feature>
<feature type="domain" description="4Fe-4S ferredoxin-type 2" evidence="1">
    <location>
        <begin position="407"/>
        <end position="436"/>
    </location>
</feature>
<feature type="region of interest" description="Disordered" evidence="2">
    <location>
        <begin position="468"/>
        <end position="492"/>
    </location>
</feature>
<feature type="region of interest" description="Disordered" evidence="2">
    <location>
        <begin position="540"/>
        <end position="574"/>
    </location>
</feature>
<feature type="region of interest" description="Disordered" evidence="2">
    <location>
        <begin position="586"/>
        <end position="618"/>
    </location>
</feature>
<feature type="region of interest" description="Disordered" evidence="2">
    <location>
        <begin position="634"/>
        <end position="666"/>
    </location>
</feature>
<feature type="region of interest" description="Disordered" evidence="2">
    <location>
        <begin position="682"/>
        <end position="714"/>
    </location>
</feature>
<feature type="region of interest" description="Disordered" evidence="2">
    <location>
        <begin position="730"/>
        <end position="762"/>
    </location>
</feature>
<feature type="region of interest" description="Disordered" evidence="2">
    <location>
        <begin position="778"/>
        <end position="811"/>
    </location>
</feature>
<feature type="compositionally biased region" description="Basic and acidic residues" evidence="2">
    <location>
        <begin position="468"/>
        <end position="489"/>
    </location>
</feature>
<feature type="compositionally biased region" description="Polar residues" evidence="2">
    <location>
        <begin position="552"/>
        <end position="561"/>
    </location>
</feature>
<feature type="compositionally biased region" description="Polar residues" evidence="2">
    <location>
        <begin position="648"/>
        <end position="657"/>
    </location>
</feature>
<feature type="compositionally biased region" description="Polar residues" evidence="2">
    <location>
        <begin position="745"/>
        <end position="756"/>
    </location>
</feature>
<feature type="compositionally biased region" description="Polar residues" evidence="2">
    <location>
        <begin position="793"/>
        <end position="804"/>
    </location>
</feature>
<feature type="binding site" evidence="1">
    <location>
        <position position="377"/>
    </location>
    <ligand>
        <name>[4Fe-4S] cluster</name>
        <dbReference type="ChEBI" id="CHEBI:49883"/>
        <label>1</label>
    </ligand>
</feature>
<feature type="binding site" evidence="1">
    <location>
        <position position="380"/>
    </location>
    <ligand>
        <name>[4Fe-4S] cluster</name>
        <dbReference type="ChEBI" id="CHEBI:49883"/>
        <label>1</label>
    </ligand>
</feature>
<feature type="binding site" evidence="1">
    <location>
        <position position="383"/>
    </location>
    <ligand>
        <name>[4Fe-4S] cluster</name>
        <dbReference type="ChEBI" id="CHEBI:49883"/>
        <label>1</label>
    </ligand>
</feature>
<feature type="binding site" evidence="1">
    <location>
        <position position="387"/>
    </location>
    <ligand>
        <name>[4Fe-4S] cluster</name>
        <dbReference type="ChEBI" id="CHEBI:49883"/>
        <label>2</label>
    </ligand>
</feature>
<feature type="binding site" evidence="1">
    <location>
        <position position="416"/>
    </location>
    <ligand>
        <name>[4Fe-4S] cluster</name>
        <dbReference type="ChEBI" id="CHEBI:49883"/>
        <label>2</label>
    </ligand>
</feature>
<feature type="binding site" evidence="1">
    <location>
        <position position="419"/>
    </location>
    <ligand>
        <name>[4Fe-4S] cluster</name>
        <dbReference type="ChEBI" id="CHEBI:49883"/>
        <label>2</label>
    </ligand>
</feature>
<feature type="binding site" evidence="1">
    <location>
        <position position="422"/>
    </location>
    <ligand>
        <name>[4Fe-4S] cluster</name>
        <dbReference type="ChEBI" id="CHEBI:49883"/>
        <label>2</label>
    </ligand>
</feature>
<feature type="binding site" evidence="1">
    <location>
        <position position="426"/>
    </location>
    <ligand>
        <name>[4Fe-4S] cluster</name>
        <dbReference type="ChEBI" id="CHEBI:49883"/>
        <label>1</label>
    </ligand>
</feature>
<dbReference type="EC" id="7.-.-.-" evidence="1"/>
<dbReference type="EMBL" id="AE004439">
    <property type="protein sequence ID" value="AAK02469.1"/>
    <property type="molecule type" value="Genomic_DNA"/>
</dbReference>
<dbReference type="RefSeq" id="WP_010906618.1">
    <property type="nucleotide sequence ID" value="NC_002663.1"/>
</dbReference>
<dbReference type="SMR" id="Q9CNP2"/>
<dbReference type="STRING" id="272843.PM0385"/>
<dbReference type="EnsemblBacteria" id="AAK02469">
    <property type="protein sequence ID" value="AAK02469"/>
    <property type="gene ID" value="PM0385"/>
</dbReference>
<dbReference type="KEGG" id="pmu:PM0385"/>
<dbReference type="PATRIC" id="fig|272843.6.peg.398"/>
<dbReference type="HOGENOM" id="CLU_010808_2_1_6"/>
<dbReference type="OrthoDB" id="9767754at2"/>
<dbReference type="Proteomes" id="UP000000809">
    <property type="component" value="Chromosome"/>
</dbReference>
<dbReference type="GO" id="GO:0005886">
    <property type="term" value="C:plasma membrane"/>
    <property type="evidence" value="ECO:0007669"/>
    <property type="project" value="UniProtKB-SubCell"/>
</dbReference>
<dbReference type="GO" id="GO:0051539">
    <property type="term" value="F:4 iron, 4 sulfur cluster binding"/>
    <property type="evidence" value="ECO:0007669"/>
    <property type="project" value="UniProtKB-KW"/>
</dbReference>
<dbReference type="GO" id="GO:0009055">
    <property type="term" value="F:electron transfer activity"/>
    <property type="evidence" value="ECO:0007669"/>
    <property type="project" value="InterPro"/>
</dbReference>
<dbReference type="GO" id="GO:0046872">
    <property type="term" value="F:metal ion binding"/>
    <property type="evidence" value="ECO:0007669"/>
    <property type="project" value="UniProtKB-KW"/>
</dbReference>
<dbReference type="GO" id="GO:0022900">
    <property type="term" value="P:electron transport chain"/>
    <property type="evidence" value="ECO:0007669"/>
    <property type="project" value="UniProtKB-UniRule"/>
</dbReference>
<dbReference type="Gene3D" id="3.30.70.20">
    <property type="match status" value="1"/>
</dbReference>
<dbReference type="Gene3D" id="3.40.50.11540">
    <property type="entry name" value="NADH-ubiquinone oxidoreductase 51kDa subunit"/>
    <property type="match status" value="1"/>
</dbReference>
<dbReference type="HAMAP" id="MF_00461">
    <property type="entry name" value="RsxC_RnfC"/>
    <property type="match status" value="1"/>
</dbReference>
<dbReference type="InterPro" id="IPR017896">
    <property type="entry name" value="4Fe4S_Fe-S-bd"/>
</dbReference>
<dbReference type="InterPro" id="IPR017900">
    <property type="entry name" value="4Fe4S_Fe_S_CS"/>
</dbReference>
<dbReference type="InterPro" id="IPR010208">
    <property type="entry name" value="Ion_transpt_RnfC/RsxC"/>
</dbReference>
<dbReference type="InterPro" id="IPR011538">
    <property type="entry name" value="Nuo51_FMN-bd"/>
</dbReference>
<dbReference type="InterPro" id="IPR037225">
    <property type="entry name" value="Nuo51_FMN-bd_sf"/>
</dbReference>
<dbReference type="InterPro" id="IPR026902">
    <property type="entry name" value="RnfC_N"/>
</dbReference>
<dbReference type="NCBIfam" id="NF003454">
    <property type="entry name" value="PRK05035.1"/>
    <property type="match status" value="1"/>
</dbReference>
<dbReference type="NCBIfam" id="TIGR01945">
    <property type="entry name" value="rnfC"/>
    <property type="match status" value="1"/>
</dbReference>
<dbReference type="PANTHER" id="PTHR43034">
    <property type="entry name" value="ION-TRANSLOCATING OXIDOREDUCTASE COMPLEX SUBUNIT C"/>
    <property type="match status" value="1"/>
</dbReference>
<dbReference type="PANTHER" id="PTHR43034:SF2">
    <property type="entry name" value="ION-TRANSLOCATING OXIDOREDUCTASE COMPLEX SUBUNIT C"/>
    <property type="match status" value="1"/>
</dbReference>
<dbReference type="Pfam" id="PF01512">
    <property type="entry name" value="Complex1_51K"/>
    <property type="match status" value="1"/>
</dbReference>
<dbReference type="Pfam" id="PF12838">
    <property type="entry name" value="Fer4_7"/>
    <property type="match status" value="1"/>
</dbReference>
<dbReference type="Pfam" id="PF13375">
    <property type="entry name" value="RnfC_N"/>
    <property type="match status" value="1"/>
</dbReference>
<dbReference type="SUPFAM" id="SSF46548">
    <property type="entry name" value="alpha-helical ferredoxin"/>
    <property type="match status" value="1"/>
</dbReference>
<dbReference type="SUPFAM" id="SSF142019">
    <property type="entry name" value="Nqo1 FMN-binding domain-like"/>
    <property type="match status" value="1"/>
</dbReference>
<dbReference type="PROSITE" id="PS00198">
    <property type="entry name" value="4FE4S_FER_1"/>
    <property type="match status" value="2"/>
</dbReference>
<dbReference type="PROSITE" id="PS51379">
    <property type="entry name" value="4FE4S_FER_2"/>
    <property type="match status" value="2"/>
</dbReference>
<protein>
    <recommendedName>
        <fullName evidence="1">Ion-translocating oxidoreductase complex subunit C</fullName>
        <ecNumber evidence="1">7.-.-.-</ecNumber>
    </recommendedName>
    <alternativeName>
        <fullName evidence="1">Rnf electron transport complex subunit C</fullName>
    </alternativeName>
</protein>
<evidence type="ECO:0000255" key="1">
    <source>
        <dbReference type="HAMAP-Rule" id="MF_00461"/>
    </source>
</evidence>
<evidence type="ECO:0000256" key="2">
    <source>
        <dbReference type="SAM" id="MobiDB-lite"/>
    </source>
</evidence>
<organism>
    <name type="scientific">Pasteurella multocida (strain Pm70)</name>
    <dbReference type="NCBI Taxonomy" id="272843"/>
    <lineage>
        <taxon>Bacteria</taxon>
        <taxon>Pseudomonadati</taxon>
        <taxon>Pseudomonadota</taxon>
        <taxon>Gammaproteobacteria</taxon>
        <taxon>Pasteurellales</taxon>
        <taxon>Pasteurellaceae</taxon>
        <taxon>Pasteurella</taxon>
    </lineage>
</organism>
<proteinExistence type="inferred from homology"/>
<reference key="1">
    <citation type="journal article" date="2001" name="Proc. Natl. Acad. Sci. U.S.A.">
        <title>Complete genomic sequence of Pasteurella multocida Pm70.</title>
        <authorList>
            <person name="May B.J."/>
            <person name="Zhang Q."/>
            <person name="Li L.L."/>
            <person name="Paustian M.L."/>
            <person name="Whittam T.S."/>
            <person name="Kapur V."/>
        </authorList>
    </citation>
    <scope>NUCLEOTIDE SEQUENCE [LARGE SCALE GENOMIC DNA]</scope>
    <source>
        <strain>Pm70</strain>
    </source>
</reference>
<comment type="function">
    <text evidence="1">Part of a membrane-bound complex that couples electron transfer with translocation of ions across the membrane.</text>
</comment>
<comment type="cofactor">
    <cofactor evidence="1">
        <name>[4Fe-4S] cluster</name>
        <dbReference type="ChEBI" id="CHEBI:49883"/>
    </cofactor>
    <text evidence="1">Binds 2 [4Fe-4S] clusters per subunit.</text>
</comment>
<comment type="subunit">
    <text evidence="1">The complex is composed of six subunits: RnfA, RnfB, RnfC, RnfD, RnfE and RnfG.</text>
</comment>
<comment type="subcellular location">
    <subcellularLocation>
        <location evidence="1">Cell inner membrane</location>
        <topology evidence="1">Peripheral membrane protein</topology>
    </subcellularLocation>
</comment>
<comment type="similarity">
    <text evidence="1">Belongs to the 4Fe4S bacterial-type ferredoxin family. RnfC subfamily.</text>
</comment>
<name>RNFC_PASMU</name>
<keyword id="KW-0004">4Fe-4S</keyword>
<keyword id="KW-0997">Cell inner membrane</keyword>
<keyword id="KW-1003">Cell membrane</keyword>
<keyword id="KW-0249">Electron transport</keyword>
<keyword id="KW-0408">Iron</keyword>
<keyword id="KW-0411">Iron-sulfur</keyword>
<keyword id="KW-0472">Membrane</keyword>
<keyword id="KW-0479">Metal-binding</keyword>
<keyword id="KW-1185">Reference proteome</keyword>
<keyword id="KW-0677">Repeat</keyword>
<keyword id="KW-1278">Translocase</keyword>
<keyword id="KW-0813">Transport</keyword>
<gene>
    <name evidence="1" type="primary">rnfC</name>
    <name type="ordered locus">PM0385</name>
</gene>
<sequence length="835" mass="90852">MDVLTRFNSGKLWDFKGGVHPPERKSQSNQKPIRHAKLVEHFYIPVVQHAGEAGNILVKVGDYVFKGQPLTQGDGLRVLPVHASTSGFIRAIAPYASAHPSGLATLCLHLEADGKDQWREQQPLDDFLTQTPEKLIEKLYQAGVAGLGGAVFPTAAKLHSAEKQVKLLIINGAECEPYITCDDRLMRDYADEIIEGTRILRYILRPEKVVIAVEDNKPEAVAALRQVLQGANDIEIRVIPTKYPSGAAKQLIQILTGMEVPSGQRSSSIGVLMQNVATAFAVKRAIMDDEPLIERVVTLTGDKVRHKGNYWVRLGTPIYQLLQQVDYHYDDRFPVFMGGPMMGFILPDLQAPVTKMTNCLLAPDHFEYAPPAPEQSCIRCSACSDACPVSLMPQQLYWFARSEDHEKSEEYALKDCIECGLCAYVCPSHIPLIQYFRQEKAKIWEIQQKAKQAEEAKQRFEARQARLAREEQERKARAQKAMEARRQEMKTAQGIDPVQAALERLKAKKTDNDSSAKVEIKTIVTEKGDILPDNSDIMAQRKARRLARQQQTQNTDVSQVETNEENKSTDSKSAVAAAIARAKAKKAAQQGSALEKDEISSSDTLSVGNDTEPVAEDPRKAAIAAAIARAKAKKAAQQGSAVEKDEISSSNTLSVGNDTEPVADDPRKVAIAAAIARAKAKKAAQQGSAVEQDEISSSDTLSIGNEAEPVADDPRKAAIAAAIARAKAKKAAQQRSAVEQDEISSSDTLSVGNETESVAEDPRKAAIAAAIARAKAKKAAQQRSAVEQDEISSSDTLSVGNETESVAEDPRKAAIAAAIARAKAKKAAKANNHDA</sequence>
<accession>Q9CNP2</accession>